<feature type="chain" id="PRO_0000175970" description="UPF0178 protein BR1979/BS1330_I1973">
    <location>
        <begin position="1"/>
        <end position="161"/>
    </location>
</feature>
<accession>Q8FYA6</accession>
<accession>G0K8J9</accession>
<comment type="similarity">
    <text evidence="1">Belongs to the UPF0178 family.</text>
</comment>
<sequence length="161" mass="17095">MENEPDTICILVDADACPVKAEIYRVAERHNLPVVIVANSFIAIPREAQRVERVVVSGNLDAADDWIAEHSRPGAVVVTADIPLASRALEKGASVIAPNGRIHTQSTIGNTLATRNLIDSLRSAGEVTGGPAPFAPKDRSAFLSALDLAIVRLKRAGFHAS</sequence>
<organism>
    <name type="scientific">Brucella suis biovar 1 (strain 1330)</name>
    <dbReference type="NCBI Taxonomy" id="204722"/>
    <lineage>
        <taxon>Bacteria</taxon>
        <taxon>Pseudomonadati</taxon>
        <taxon>Pseudomonadota</taxon>
        <taxon>Alphaproteobacteria</taxon>
        <taxon>Hyphomicrobiales</taxon>
        <taxon>Brucellaceae</taxon>
        <taxon>Brucella/Ochrobactrum group</taxon>
        <taxon>Brucella</taxon>
    </lineage>
</organism>
<name>Y1979_BRUSU</name>
<protein>
    <recommendedName>
        <fullName evidence="1">UPF0178 protein BR1979/BS1330_I1973</fullName>
    </recommendedName>
</protein>
<gene>
    <name type="ordered locus">BR1979</name>
    <name type="ordered locus">BS1330_I1973</name>
</gene>
<evidence type="ECO:0000255" key="1">
    <source>
        <dbReference type="HAMAP-Rule" id="MF_00489"/>
    </source>
</evidence>
<reference key="1">
    <citation type="journal article" date="2002" name="Proc. Natl. Acad. Sci. U.S.A.">
        <title>The Brucella suis genome reveals fundamental similarities between animal and plant pathogens and symbionts.</title>
        <authorList>
            <person name="Paulsen I.T."/>
            <person name="Seshadri R."/>
            <person name="Nelson K.E."/>
            <person name="Eisen J.A."/>
            <person name="Heidelberg J.F."/>
            <person name="Read T.D."/>
            <person name="Dodson R.J."/>
            <person name="Umayam L.A."/>
            <person name="Brinkac L.M."/>
            <person name="Beanan M.J."/>
            <person name="Daugherty S.C."/>
            <person name="DeBoy R.T."/>
            <person name="Durkin A.S."/>
            <person name="Kolonay J.F."/>
            <person name="Madupu R."/>
            <person name="Nelson W.C."/>
            <person name="Ayodeji B."/>
            <person name="Kraul M."/>
            <person name="Shetty J."/>
            <person name="Malek J.A."/>
            <person name="Van Aken S.E."/>
            <person name="Riedmuller S."/>
            <person name="Tettelin H."/>
            <person name="Gill S.R."/>
            <person name="White O."/>
            <person name="Salzberg S.L."/>
            <person name="Hoover D.L."/>
            <person name="Lindler L.E."/>
            <person name="Halling S.M."/>
            <person name="Boyle S.M."/>
            <person name="Fraser C.M."/>
        </authorList>
    </citation>
    <scope>NUCLEOTIDE SEQUENCE [LARGE SCALE GENOMIC DNA]</scope>
    <source>
        <strain>1330</strain>
    </source>
</reference>
<reference key="2">
    <citation type="journal article" date="2011" name="J. Bacteriol.">
        <title>Revised genome sequence of Brucella suis 1330.</title>
        <authorList>
            <person name="Tae H."/>
            <person name="Shallom S."/>
            <person name="Settlage R."/>
            <person name="Preston D."/>
            <person name="Adams L.G."/>
            <person name="Garner H.R."/>
        </authorList>
    </citation>
    <scope>NUCLEOTIDE SEQUENCE [LARGE SCALE GENOMIC DNA]</scope>
    <source>
        <strain>1330</strain>
    </source>
</reference>
<dbReference type="EMBL" id="AE014291">
    <property type="protein sequence ID" value="AAN30869.1"/>
    <property type="molecule type" value="Genomic_DNA"/>
</dbReference>
<dbReference type="EMBL" id="CP002997">
    <property type="protein sequence ID" value="AEM19286.1"/>
    <property type="molecule type" value="Genomic_DNA"/>
</dbReference>
<dbReference type="RefSeq" id="WP_004692102.1">
    <property type="nucleotide sequence ID" value="NZ_KN046804.1"/>
</dbReference>
<dbReference type="KEGG" id="bms:BR1979"/>
<dbReference type="KEGG" id="bsi:BS1330_I1973"/>
<dbReference type="PATRIC" id="fig|204722.21.peg.3206"/>
<dbReference type="HOGENOM" id="CLU_106619_2_1_5"/>
<dbReference type="PhylomeDB" id="Q8FYA6"/>
<dbReference type="Proteomes" id="UP000007104">
    <property type="component" value="Chromosome I"/>
</dbReference>
<dbReference type="CDD" id="cd18720">
    <property type="entry name" value="PIN_YqxD-like"/>
    <property type="match status" value="1"/>
</dbReference>
<dbReference type="HAMAP" id="MF_00489">
    <property type="entry name" value="UPF0178"/>
    <property type="match status" value="1"/>
</dbReference>
<dbReference type="InterPro" id="IPR003791">
    <property type="entry name" value="UPF0178"/>
</dbReference>
<dbReference type="NCBIfam" id="NF001095">
    <property type="entry name" value="PRK00124.1"/>
    <property type="match status" value="1"/>
</dbReference>
<dbReference type="PANTHER" id="PTHR35146">
    <property type="entry name" value="UPF0178 PROTEIN YAII"/>
    <property type="match status" value="1"/>
</dbReference>
<dbReference type="PANTHER" id="PTHR35146:SF1">
    <property type="entry name" value="UPF0178 PROTEIN YAII"/>
    <property type="match status" value="1"/>
</dbReference>
<dbReference type="Pfam" id="PF02639">
    <property type="entry name" value="DUF188"/>
    <property type="match status" value="1"/>
</dbReference>
<proteinExistence type="inferred from homology"/>